<dbReference type="EMBL" id="CP000859">
    <property type="protein sequence ID" value="ABW67860.1"/>
    <property type="molecule type" value="Genomic_DNA"/>
</dbReference>
<dbReference type="RefSeq" id="WP_012175472.1">
    <property type="nucleotide sequence ID" value="NC_009943.1"/>
</dbReference>
<dbReference type="SMR" id="A8ZTS7"/>
<dbReference type="STRING" id="96561.Dole_2056"/>
<dbReference type="KEGG" id="dol:Dole_2056"/>
<dbReference type="eggNOG" id="COG0227">
    <property type="taxonomic scope" value="Bacteria"/>
</dbReference>
<dbReference type="HOGENOM" id="CLU_064548_7_0_7"/>
<dbReference type="OrthoDB" id="9805609at2"/>
<dbReference type="Proteomes" id="UP000008561">
    <property type="component" value="Chromosome"/>
</dbReference>
<dbReference type="GO" id="GO:1990904">
    <property type="term" value="C:ribonucleoprotein complex"/>
    <property type="evidence" value="ECO:0007669"/>
    <property type="project" value="UniProtKB-KW"/>
</dbReference>
<dbReference type="GO" id="GO:0005840">
    <property type="term" value="C:ribosome"/>
    <property type="evidence" value="ECO:0007669"/>
    <property type="project" value="UniProtKB-KW"/>
</dbReference>
<dbReference type="GO" id="GO:0003735">
    <property type="term" value="F:structural constituent of ribosome"/>
    <property type="evidence" value="ECO:0007669"/>
    <property type="project" value="InterPro"/>
</dbReference>
<dbReference type="GO" id="GO:0006412">
    <property type="term" value="P:translation"/>
    <property type="evidence" value="ECO:0007669"/>
    <property type="project" value="UniProtKB-UniRule"/>
</dbReference>
<dbReference type="Gene3D" id="2.20.150.30">
    <property type="match status" value="1"/>
</dbReference>
<dbReference type="Gene3D" id="2.30.170.40">
    <property type="entry name" value="Ribosomal protein L28/L24"/>
    <property type="match status" value="1"/>
</dbReference>
<dbReference type="HAMAP" id="MF_00373">
    <property type="entry name" value="Ribosomal_bL28"/>
    <property type="match status" value="1"/>
</dbReference>
<dbReference type="InterPro" id="IPR050096">
    <property type="entry name" value="Bacterial_rp_bL28"/>
</dbReference>
<dbReference type="InterPro" id="IPR026569">
    <property type="entry name" value="Ribosomal_bL28"/>
</dbReference>
<dbReference type="InterPro" id="IPR034704">
    <property type="entry name" value="Ribosomal_bL28/bL31-like_sf"/>
</dbReference>
<dbReference type="InterPro" id="IPR001383">
    <property type="entry name" value="Ribosomal_bL28_bact-type"/>
</dbReference>
<dbReference type="InterPro" id="IPR037147">
    <property type="entry name" value="Ribosomal_bL28_sf"/>
</dbReference>
<dbReference type="NCBIfam" id="TIGR00009">
    <property type="entry name" value="L28"/>
    <property type="match status" value="1"/>
</dbReference>
<dbReference type="PANTHER" id="PTHR39080">
    <property type="entry name" value="50S RIBOSOMAL PROTEIN L28"/>
    <property type="match status" value="1"/>
</dbReference>
<dbReference type="PANTHER" id="PTHR39080:SF1">
    <property type="entry name" value="LARGE RIBOSOMAL SUBUNIT PROTEIN BL28A"/>
    <property type="match status" value="1"/>
</dbReference>
<dbReference type="Pfam" id="PF00830">
    <property type="entry name" value="Ribosomal_L28"/>
    <property type="match status" value="1"/>
</dbReference>
<dbReference type="SUPFAM" id="SSF143800">
    <property type="entry name" value="L28p-like"/>
    <property type="match status" value="1"/>
</dbReference>
<evidence type="ECO:0000255" key="1">
    <source>
        <dbReference type="HAMAP-Rule" id="MF_00373"/>
    </source>
</evidence>
<evidence type="ECO:0000305" key="2"/>
<feature type="chain" id="PRO_1000121621" description="Large ribosomal subunit protein bL28">
    <location>
        <begin position="1"/>
        <end position="63"/>
    </location>
</feature>
<gene>
    <name evidence="1" type="primary">rpmB</name>
    <name type="ordered locus">Dole_2056</name>
</gene>
<reference key="1">
    <citation type="submission" date="2007-10" db="EMBL/GenBank/DDBJ databases">
        <title>Complete sequence of Desulfococcus oleovorans Hxd3.</title>
        <authorList>
            <consortium name="US DOE Joint Genome Institute"/>
            <person name="Copeland A."/>
            <person name="Lucas S."/>
            <person name="Lapidus A."/>
            <person name="Barry K."/>
            <person name="Glavina del Rio T."/>
            <person name="Dalin E."/>
            <person name="Tice H."/>
            <person name="Pitluck S."/>
            <person name="Kiss H."/>
            <person name="Brettin T."/>
            <person name="Bruce D."/>
            <person name="Detter J.C."/>
            <person name="Han C."/>
            <person name="Schmutz J."/>
            <person name="Larimer F."/>
            <person name="Land M."/>
            <person name="Hauser L."/>
            <person name="Kyrpides N."/>
            <person name="Kim E."/>
            <person name="Wawrik B."/>
            <person name="Richardson P."/>
        </authorList>
    </citation>
    <scope>NUCLEOTIDE SEQUENCE [LARGE SCALE GENOMIC DNA]</scope>
    <source>
        <strain>DSM 6200 / JCM 39069 / Hxd3</strain>
    </source>
</reference>
<keyword id="KW-1185">Reference proteome</keyword>
<keyword id="KW-0687">Ribonucleoprotein</keyword>
<keyword id="KW-0689">Ribosomal protein</keyword>
<accession>A8ZTS7</accession>
<comment type="similarity">
    <text evidence="1">Belongs to the bacterial ribosomal protein bL28 family.</text>
</comment>
<sequence>MARQCEICGKKPMVGANVSHAHNVTKRRFNPNLQRVRAVRDGKPQTLYVCTNCIKSGFVVKAA</sequence>
<name>RL28_DESOH</name>
<organism>
    <name type="scientific">Desulfosudis oleivorans (strain DSM 6200 / JCM 39069 / Hxd3)</name>
    <name type="common">Desulfococcus oleovorans</name>
    <dbReference type="NCBI Taxonomy" id="96561"/>
    <lineage>
        <taxon>Bacteria</taxon>
        <taxon>Pseudomonadati</taxon>
        <taxon>Thermodesulfobacteriota</taxon>
        <taxon>Desulfobacteria</taxon>
        <taxon>Desulfobacterales</taxon>
        <taxon>Desulfosudaceae</taxon>
        <taxon>Desulfosudis</taxon>
    </lineage>
</organism>
<protein>
    <recommendedName>
        <fullName evidence="1">Large ribosomal subunit protein bL28</fullName>
    </recommendedName>
    <alternativeName>
        <fullName evidence="2">50S ribosomal protein L28</fullName>
    </alternativeName>
</protein>
<proteinExistence type="inferred from homology"/>